<accession>P55709</accession>
<evidence type="ECO:0000250" key="1">
    <source>
        <dbReference type="UniProtKB" id="P00861"/>
    </source>
</evidence>
<dbReference type="EMBL" id="U00090">
    <property type="protein sequence ID" value="AAB91940.1"/>
    <property type="molecule type" value="Genomic_DNA"/>
</dbReference>
<dbReference type="RefSeq" id="NP_444153.1">
    <property type="nucleotide sequence ID" value="NC_000914.2"/>
</dbReference>
<dbReference type="RefSeq" id="WP_010875113.1">
    <property type="nucleotide sequence ID" value="NC_000914.2"/>
</dbReference>
<dbReference type="SMR" id="P55709"/>
<dbReference type="KEGG" id="rhi:NGR_a00720"/>
<dbReference type="PATRIC" id="fig|394.7.peg.64"/>
<dbReference type="eggNOG" id="COG0019">
    <property type="taxonomic scope" value="Bacteria"/>
</dbReference>
<dbReference type="HOGENOM" id="CLU_042407_0_0_5"/>
<dbReference type="OrthoDB" id="9802241at2"/>
<dbReference type="Proteomes" id="UP000001054">
    <property type="component" value="Plasmid pNGR234a"/>
</dbReference>
<dbReference type="GO" id="GO:0008836">
    <property type="term" value="F:diaminopimelate decarboxylase activity"/>
    <property type="evidence" value="ECO:0007669"/>
    <property type="project" value="TreeGrafter"/>
</dbReference>
<dbReference type="GO" id="GO:0009089">
    <property type="term" value="P:lysine biosynthetic process via diaminopimelate"/>
    <property type="evidence" value="ECO:0007669"/>
    <property type="project" value="TreeGrafter"/>
</dbReference>
<dbReference type="CDD" id="cd06842">
    <property type="entry name" value="PLPDE_III_Y4yA_like"/>
    <property type="match status" value="1"/>
</dbReference>
<dbReference type="Gene3D" id="3.20.20.10">
    <property type="entry name" value="Alanine racemase"/>
    <property type="match status" value="1"/>
</dbReference>
<dbReference type="Gene3D" id="2.40.37.10">
    <property type="entry name" value="Lyase, Ornithine Decarboxylase, Chain A, domain 1"/>
    <property type="match status" value="1"/>
</dbReference>
<dbReference type="InterPro" id="IPR009006">
    <property type="entry name" value="Ala_racemase/Decarboxylase_C"/>
</dbReference>
<dbReference type="InterPro" id="IPR022644">
    <property type="entry name" value="De-COase2_N"/>
</dbReference>
<dbReference type="InterPro" id="IPR000183">
    <property type="entry name" value="Orn/DAP/Arg_de-COase"/>
</dbReference>
<dbReference type="InterPro" id="IPR029066">
    <property type="entry name" value="PLP-binding_barrel"/>
</dbReference>
<dbReference type="InterPro" id="IPR042152">
    <property type="entry name" value="Y4yA-like"/>
</dbReference>
<dbReference type="PANTHER" id="PTHR43727">
    <property type="entry name" value="DIAMINOPIMELATE DECARBOXYLASE"/>
    <property type="match status" value="1"/>
</dbReference>
<dbReference type="PANTHER" id="PTHR43727:SF2">
    <property type="entry name" value="GROUP IV DECARBOXYLASE"/>
    <property type="match status" value="1"/>
</dbReference>
<dbReference type="Pfam" id="PF02784">
    <property type="entry name" value="Orn_Arg_deC_N"/>
    <property type="match status" value="1"/>
</dbReference>
<dbReference type="PRINTS" id="PR01179">
    <property type="entry name" value="ODADCRBXLASE"/>
</dbReference>
<dbReference type="SUPFAM" id="SSF50621">
    <property type="entry name" value="Alanine racemase C-terminal domain-like"/>
    <property type="match status" value="1"/>
</dbReference>
<dbReference type="SUPFAM" id="SSF51419">
    <property type="entry name" value="PLP-binding barrel"/>
    <property type="match status" value="1"/>
</dbReference>
<sequence length="457" mass="49945">MTLHCQKIGHGLPPILRSATADLLTKYGPLLFDWAARHGSPLNLVWPDALRENLAALKGVLTERRLEHAIYYGAKANKSPGLMQAALSAGAGLDVSSLYELRDARRLGADGARLVATGPAKTSAFHQELINCNALISVDSPEELEDLIHGLPADAGQQSILLRLRPRDQSKSRFGMPPDAVVHCLARLAGEGRVRFDGLHFHLSGYRRETRVAALREAADLIAEARRMGFFPGMIDIGGGLPIQYVDRARYKAHLAAQAPEDYRTGKIPDSFYPYGSTLSAADWLHRLLEAEMNQGRSVAGYLAREGLTLAMEPGRALADQAAITVFRISRVKALGPDSHVIFVEGSSFSACETWFASEFLIDPILVPATKATVQLPPVRAYLAGHSCLDEDVISNRWLTFPTAPRAGDLLVYANTGGYQMDLLENEFHRHPMPARFCVIEDAEGRPNLVPDTIGEV</sequence>
<name>Y4YA_SINFN</name>
<keyword id="KW-0614">Plasmid</keyword>
<keyword id="KW-0663">Pyridoxal phosphate</keyword>
<keyword id="KW-1185">Reference proteome</keyword>
<feature type="chain" id="PRO_0000200970" description="Uncharacterized protein y4yA">
    <location>
        <begin position="1"/>
        <end position="457"/>
    </location>
</feature>
<feature type="modified residue" description="N6-(pyridoxal phosphate)lysine" evidence="1">
    <location>
        <position position="75"/>
    </location>
</feature>
<comment type="cofactor">
    <cofactor evidence="1">
        <name>pyridoxal 5'-phosphate</name>
        <dbReference type="ChEBI" id="CHEBI:597326"/>
    </cofactor>
</comment>
<reference key="1">
    <citation type="journal article" date="1997" name="Nature">
        <title>Molecular basis of symbiosis between Rhizobium and legumes.</title>
        <authorList>
            <person name="Freiberg C.A."/>
            <person name="Fellay R."/>
            <person name="Bairoch A."/>
            <person name="Broughton W.J."/>
            <person name="Rosenthal A."/>
            <person name="Perret X."/>
        </authorList>
    </citation>
    <scope>NUCLEOTIDE SEQUENCE [LARGE SCALE GENOMIC DNA]</scope>
    <source>
        <strain>NBRC 101917 / NGR234</strain>
    </source>
</reference>
<reference key="2">
    <citation type="journal article" date="2009" name="Appl. Environ. Microbiol.">
        <title>Rhizobium sp. strain NGR234 possesses a remarkable number of secretion systems.</title>
        <authorList>
            <person name="Schmeisser C."/>
            <person name="Liesegang H."/>
            <person name="Krysciak D."/>
            <person name="Bakkou N."/>
            <person name="Le Quere A."/>
            <person name="Wollherr A."/>
            <person name="Heinemeyer I."/>
            <person name="Morgenstern B."/>
            <person name="Pommerening-Roeser A."/>
            <person name="Flores M."/>
            <person name="Palacios R."/>
            <person name="Brenner S."/>
            <person name="Gottschalk G."/>
            <person name="Schmitz R.A."/>
            <person name="Broughton W.J."/>
            <person name="Perret X."/>
            <person name="Strittmatter A.W."/>
            <person name="Streit W.R."/>
        </authorList>
    </citation>
    <scope>NUCLEOTIDE SEQUENCE [LARGE SCALE GENOMIC DNA]</scope>
    <source>
        <strain>NBRC 101917 / NGR234</strain>
    </source>
</reference>
<gene>
    <name type="ordered locus">NGR_a00720</name>
    <name type="ORF">y4yA</name>
</gene>
<organism>
    <name type="scientific">Sinorhizobium fredii (strain NBRC 101917 / NGR234)</name>
    <dbReference type="NCBI Taxonomy" id="394"/>
    <lineage>
        <taxon>Bacteria</taxon>
        <taxon>Pseudomonadati</taxon>
        <taxon>Pseudomonadota</taxon>
        <taxon>Alphaproteobacteria</taxon>
        <taxon>Hyphomicrobiales</taxon>
        <taxon>Rhizobiaceae</taxon>
        <taxon>Sinorhizobium/Ensifer group</taxon>
        <taxon>Sinorhizobium</taxon>
    </lineage>
</organism>
<proteinExistence type="inferred from homology"/>
<geneLocation type="plasmid">
    <name>sym pNGR234a</name>
</geneLocation>
<protein>
    <recommendedName>
        <fullName>Uncharacterized protein y4yA</fullName>
    </recommendedName>
</protein>